<comment type="function">
    <text evidence="1">Involved in DNA repair and RecF pathway recombination.</text>
</comment>
<comment type="similarity">
    <text evidence="1">Belongs to the RecO family.</text>
</comment>
<keyword id="KW-0227">DNA damage</keyword>
<keyword id="KW-0233">DNA recombination</keyword>
<keyword id="KW-0234">DNA repair</keyword>
<sequence>MAAEQLNGYVLHRRAYRETSFLVNIFTLENGKVSAVVKGVRGSKSDKKSLLQPFQPLLIGVSGRSELKNLQQVESTGAMIRLAGQALYCALYLNEVLNRVLADEIPHPEIFVLYQQSMHALVAQTNFEPVLRSFELGLLDALGYGIDLTHDADTGQPVADNGYYRIVPELGCVYQGDIRLSGCYSGQSLLNVASENWDKDSLLAAKHITRTTLGELLGSKPLMSRELFKQTHFKSRGREL</sequence>
<evidence type="ECO:0000255" key="1">
    <source>
        <dbReference type="HAMAP-Rule" id="MF_00201"/>
    </source>
</evidence>
<dbReference type="EMBL" id="CP000388">
    <property type="protein sequence ID" value="ABG42212.1"/>
    <property type="molecule type" value="Genomic_DNA"/>
</dbReference>
<dbReference type="RefSeq" id="WP_011576431.1">
    <property type="nucleotide sequence ID" value="NC_008228.1"/>
</dbReference>
<dbReference type="SMR" id="Q15PH6"/>
<dbReference type="STRING" id="342610.Patl_3710"/>
<dbReference type="KEGG" id="pat:Patl_3710"/>
<dbReference type="eggNOG" id="COG1381">
    <property type="taxonomic scope" value="Bacteria"/>
</dbReference>
<dbReference type="HOGENOM" id="CLU_066645_1_0_6"/>
<dbReference type="OrthoDB" id="9804792at2"/>
<dbReference type="Proteomes" id="UP000001981">
    <property type="component" value="Chromosome"/>
</dbReference>
<dbReference type="GO" id="GO:0043590">
    <property type="term" value="C:bacterial nucleoid"/>
    <property type="evidence" value="ECO:0007669"/>
    <property type="project" value="TreeGrafter"/>
</dbReference>
<dbReference type="GO" id="GO:0006310">
    <property type="term" value="P:DNA recombination"/>
    <property type="evidence" value="ECO:0007669"/>
    <property type="project" value="UniProtKB-UniRule"/>
</dbReference>
<dbReference type="GO" id="GO:0006302">
    <property type="term" value="P:double-strand break repair"/>
    <property type="evidence" value="ECO:0007669"/>
    <property type="project" value="TreeGrafter"/>
</dbReference>
<dbReference type="Gene3D" id="2.40.50.140">
    <property type="entry name" value="Nucleic acid-binding proteins"/>
    <property type="match status" value="1"/>
</dbReference>
<dbReference type="Gene3D" id="1.20.1440.120">
    <property type="entry name" value="Recombination protein O, C-terminal domain"/>
    <property type="match status" value="1"/>
</dbReference>
<dbReference type="HAMAP" id="MF_00201">
    <property type="entry name" value="RecO"/>
    <property type="match status" value="1"/>
</dbReference>
<dbReference type="InterPro" id="IPR037278">
    <property type="entry name" value="ARFGAP/RecO"/>
</dbReference>
<dbReference type="InterPro" id="IPR022572">
    <property type="entry name" value="DNA_rep/recomb_RecO_N"/>
</dbReference>
<dbReference type="InterPro" id="IPR012340">
    <property type="entry name" value="NA-bd_OB-fold"/>
</dbReference>
<dbReference type="InterPro" id="IPR003717">
    <property type="entry name" value="RecO"/>
</dbReference>
<dbReference type="InterPro" id="IPR042242">
    <property type="entry name" value="RecO_C"/>
</dbReference>
<dbReference type="NCBIfam" id="TIGR00613">
    <property type="entry name" value="reco"/>
    <property type="match status" value="1"/>
</dbReference>
<dbReference type="PANTHER" id="PTHR33991">
    <property type="entry name" value="DNA REPAIR PROTEIN RECO"/>
    <property type="match status" value="1"/>
</dbReference>
<dbReference type="PANTHER" id="PTHR33991:SF1">
    <property type="entry name" value="DNA REPAIR PROTEIN RECO"/>
    <property type="match status" value="1"/>
</dbReference>
<dbReference type="Pfam" id="PF02565">
    <property type="entry name" value="RecO_C"/>
    <property type="match status" value="1"/>
</dbReference>
<dbReference type="Pfam" id="PF11967">
    <property type="entry name" value="RecO_N"/>
    <property type="match status" value="1"/>
</dbReference>
<dbReference type="SUPFAM" id="SSF57863">
    <property type="entry name" value="ArfGap/RecO-like zinc finger"/>
    <property type="match status" value="1"/>
</dbReference>
<dbReference type="SUPFAM" id="SSF50249">
    <property type="entry name" value="Nucleic acid-binding proteins"/>
    <property type="match status" value="1"/>
</dbReference>
<gene>
    <name evidence="1" type="primary">recO</name>
    <name type="ordered locus">Patl_3710</name>
</gene>
<reference key="1">
    <citation type="submission" date="2006-06" db="EMBL/GenBank/DDBJ databases">
        <title>Complete sequence of Pseudoalteromonas atlantica T6c.</title>
        <authorList>
            <consortium name="US DOE Joint Genome Institute"/>
            <person name="Copeland A."/>
            <person name="Lucas S."/>
            <person name="Lapidus A."/>
            <person name="Barry K."/>
            <person name="Detter J.C."/>
            <person name="Glavina del Rio T."/>
            <person name="Hammon N."/>
            <person name="Israni S."/>
            <person name="Dalin E."/>
            <person name="Tice H."/>
            <person name="Pitluck S."/>
            <person name="Saunders E."/>
            <person name="Brettin T."/>
            <person name="Bruce D."/>
            <person name="Han C."/>
            <person name="Tapia R."/>
            <person name="Gilna P."/>
            <person name="Schmutz J."/>
            <person name="Larimer F."/>
            <person name="Land M."/>
            <person name="Hauser L."/>
            <person name="Kyrpides N."/>
            <person name="Kim E."/>
            <person name="Karls A.C."/>
            <person name="Bartlett D."/>
            <person name="Higgins B.P."/>
            <person name="Richardson P."/>
        </authorList>
    </citation>
    <scope>NUCLEOTIDE SEQUENCE [LARGE SCALE GENOMIC DNA]</scope>
    <source>
        <strain>T6c / ATCC BAA-1087</strain>
    </source>
</reference>
<name>RECO_PSEA6</name>
<accession>Q15PH6</accession>
<organism>
    <name type="scientific">Pseudoalteromonas atlantica (strain T6c / ATCC BAA-1087)</name>
    <dbReference type="NCBI Taxonomy" id="3042615"/>
    <lineage>
        <taxon>Bacteria</taxon>
        <taxon>Pseudomonadati</taxon>
        <taxon>Pseudomonadota</taxon>
        <taxon>Gammaproteobacteria</taxon>
        <taxon>Alteromonadales</taxon>
        <taxon>Alteromonadaceae</taxon>
        <taxon>Paraglaciecola</taxon>
    </lineage>
</organism>
<proteinExistence type="inferred from homology"/>
<feature type="chain" id="PRO_0000264830" description="DNA repair protein RecO">
    <location>
        <begin position="1"/>
        <end position="240"/>
    </location>
</feature>
<protein>
    <recommendedName>
        <fullName evidence="1">DNA repair protein RecO</fullName>
    </recommendedName>
    <alternativeName>
        <fullName evidence="1">Recombination protein O</fullName>
    </alternativeName>
</protein>